<evidence type="ECO:0000250" key="1"/>
<evidence type="ECO:0000269" key="2">
    <source>
    </source>
</evidence>
<evidence type="ECO:0000305" key="3"/>
<protein>
    <recommendedName>
        <fullName>Sucrose synthase 7</fullName>
        <shortName>OsSUS7</shortName>
        <ecNumber>2.4.1.13</ecNumber>
    </recommendedName>
    <alternativeName>
        <fullName>Sucrose-UDP glucosyltransferase 7</fullName>
    </alternativeName>
</protein>
<proteinExistence type="evidence at transcript level"/>
<gene>
    <name type="primary">SUS7</name>
    <name type="ordered locus">Os04g0249500</name>
    <name type="ordered locus">LOC_Os04g17650</name>
    <name type="ORF">OSJNBb0026I12.4</name>
</gene>
<accession>Q7XNX6</accession>
<accession>Q0JEL4</accession>
<comment type="function">
    <text evidence="1">Sucrose-cleaving enzyme that provides UDP-glucose and fructose for various metabolic pathways.</text>
</comment>
<comment type="catalytic activity">
    <reaction>
        <text>an NDP-alpha-D-glucose + D-fructose = a ribonucleoside 5'-diphosphate + sucrose + H(+)</text>
        <dbReference type="Rhea" id="RHEA:16241"/>
        <dbReference type="ChEBI" id="CHEBI:15378"/>
        <dbReference type="ChEBI" id="CHEBI:17992"/>
        <dbReference type="ChEBI" id="CHEBI:37721"/>
        <dbReference type="ChEBI" id="CHEBI:57930"/>
        <dbReference type="ChEBI" id="CHEBI:76533"/>
        <dbReference type="EC" id="2.4.1.13"/>
    </reaction>
</comment>
<comment type="subcellular location">
    <subcellularLocation>
        <location evidence="2">Cytoplasm</location>
    </subcellularLocation>
    <subcellularLocation>
        <location evidence="2">Membrane</location>
        <topology evidence="2">Peripheral membrane protein</topology>
    </subcellularLocation>
</comment>
<comment type="tissue specificity">
    <text evidence="2">Predominantly expressed in roots, flowers and immature seeds.</text>
</comment>
<comment type="similarity">
    <text evidence="3">Belongs to the glycosyltransferase 1 family. Plant sucrose synthase subfamily.</text>
</comment>
<comment type="sequence caution" evidence="3">
    <conflict type="erroneous gene model prediction">
        <sequence resource="EMBL-CDS" id="BAF14223"/>
    </conflict>
</comment>
<organism>
    <name type="scientific">Oryza sativa subsp. japonica</name>
    <name type="common">Rice</name>
    <dbReference type="NCBI Taxonomy" id="39947"/>
    <lineage>
        <taxon>Eukaryota</taxon>
        <taxon>Viridiplantae</taxon>
        <taxon>Streptophyta</taxon>
        <taxon>Embryophyta</taxon>
        <taxon>Tracheophyta</taxon>
        <taxon>Spermatophyta</taxon>
        <taxon>Magnoliopsida</taxon>
        <taxon>Liliopsida</taxon>
        <taxon>Poales</taxon>
        <taxon>Poaceae</taxon>
        <taxon>BOP clade</taxon>
        <taxon>Oryzoideae</taxon>
        <taxon>Oryzeae</taxon>
        <taxon>Oryzinae</taxon>
        <taxon>Oryza</taxon>
        <taxon>Oryza sativa</taxon>
    </lineage>
</organism>
<sequence length="855" mass="97739">MASKLSFKRMDSIAETMPDALRQSRYQMKRCFQRYVSKGKRLLKNQQLMEELEKSLDDKVENEKLVEGFLGYIICSTQEAVVLPPFVAFAVRMNPGIWEYVKVHSDDLSVEGITPSEYLKFKETLYDEKWAKDDNSLEVDFGALDLSTPHLTLPSSIGNGLQFVSKFMSSKLGGKPESMKPLLDYLLTLNYRGEKLMINDTIDTVSKLQTALLLAEVFVSGLPKYTPYLKFEQRFQEWGLEKGWGDTAERCKETLNCLSEVLQAPDPTNMEKFFSRVPSIFNIVIFSIHGYFGQEKVLGLPDTGGQVVYILDQVRAMEEELLQRIKQQGLHVTPKILVLTRLIPDAKGTKCNVELEPVENTKYSHILRVPFKTEDGKDLRQWVSRFDIYPYLERYAQNSCAKILDILEGKPDLIIGNYTDGNLVASLLSNKLCVTQGTIAHALEKTKYEDSDVKWREMDQKYHFSCQFTADMISMNTSDFIITSTYQEIAGSKEKPGQYEHHYAFTMPGLCRYATGINVFDPKFNIAAPGADQSIYFPFTQKQKRLTDLHPQIDELLYSKDDTDEHIGYLADRNKPIIFSMARLDKVKNITGLVEWYGQNKKLRDLVNLVVVAGLLDASQSKDREEIEEINKMHNLMDRYQLKGQIRWIKAQTDRVRNGELYRCIADTKGAFVQPALYEAFGLTVIEAMNCGLPTFATNQGGPAEIIIDGVSGFHVNPINGREAGIKIADFFQKCKEDPSYWNKVSTAGLQRIYECYTWKIYATRVLNMGSTYSFWKTLNKEERQAKQRYLQIFYNVQYRNLAKAVARAGDQQARQTTTGVAPSEIVVRPKERKPQTRMQRILTRLAGQKPPVSE</sequence>
<name>SUS7_ORYSJ</name>
<feature type="chain" id="PRO_0000418809" description="Sucrose synthase 7">
    <location>
        <begin position="1"/>
        <end position="855"/>
    </location>
</feature>
<feature type="region of interest" description="GT-B glycosyltransferase" evidence="1">
    <location>
        <begin position="279"/>
        <end position="758"/>
    </location>
</feature>
<dbReference type="EC" id="2.4.1.13"/>
<dbReference type="EMBL" id="HQ895725">
    <property type="protein sequence ID" value="AEX32880.1"/>
    <property type="molecule type" value="mRNA"/>
</dbReference>
<dbReference type="EMBL" id="AL663002">
    <property type="protein sequence ID" value="CAE03896.2"/>
    <property type="molecule type" value="Genomic_DNA"/>
</dbReference>
<dbReference type="EMBL" id="AP008210">
    <property type="protein sequence ID" value="BAF14223.2"/>
    <property type="status" value="ALT_SEQ"/>
    <property type="molecule type" value="Genomic_DNA"/>
</dbReference>
<dbReference type="EMBL" id="AP014960">
    <property type="status" value="NOT_ANNOTATED_CDS"/>
    <property type="molecule type" value="Genomic_DNA"/>
</dbReference>
<dbReference type="RefSeq" id="XP_015634274.1">
    <property type="nucleotide sequence ID" value="XM_015778788.1"/>
</dbReference>
<dbReference type="SMR" id="Q7XNX6"/>
<dbReference type="FunCoup" id="Q7XNX6">
    <property type="interactions" value="376"/>
</dbReference>
<dbReference type="STRING" id="39947.Q7XNX6"/>
<dbReference type="PaxDb" id="39947-Q7XNX6"/>
<dbReference type="EnsemblPlants" id="Os04t0249500-01">
    <property type="protein sequence ID" value="Os04t0249500-01"/>
    <property type="gene ID" value="Os04g0249500"/>
</dbReference>
<dbReference type="Gramene" id="Os04t0249500-01">
    <property type="protein sequence ID" value="Os04t0249500-01"/>
    <property type="gene ID" value="Os04g0249500"/>
</dbReference>
<dbReference type="KEGG" id="dosa:Os04g0249500"/>
<dbReference type="eggNOG" id="KOG0853">
    <property type="taxonomic scope" value="Eukaryota"/>
</dbReference>
<dbReference type="HOGENOM" id="CLU_019158_1_0_1"/>
<dbReference type="InParanoid" id="Q7XNX6"/>
<dbReference type="OrthoDB" id="937291at2759"/>
<dbReference type="PlantReactome" id="R-OSA-1119452">
    <property type="pathway name" value="Galactose degradation II"/>
</dbReference>
<dbReference type="PlantReactome" id="R-OSA-1119465">
    <property type="pathway name" value="Sucrose biosynthesis"/>
</dbReference>
<dbReference type="Proteomes" id="UP000000763">
    <property type="component" value="Chromosome 4"/>
</dbReference>
<dbReference type="Proteomes" id="UP000059680">
    <property type="component" value="Chromosome 4"/>
</dbReference>
<dbReference type="GO" id="GO:0005737">
    <property type="term" value="C:cytoplasm"/>
    <property type="evidence" value="ECO:0007669"/>
    <property type="project" value="UniProtKB-SubCell"/>
</dbReference>
<dbReference type="GO" id="GO:0016020">
    <property type="term" value="C:membrane"/>
    <property type="evidence" value="ECO:0007669"/>
    <property type="project" value="UniProtKB-SubCell"/>
</dbReference>
<dbReference type="GO" id="GO:0016157">
    <property type="term" value="F:sucrose synthase activity"/>
    <property type="evidence" value="ECO:0000318"/>
    <property type="project" value="GO_Central"/>
</dbReference>
<dbReference type="GO" id="GO:0005985">
    <property type="term" value="P:sucrose metabolic process"/>
    <property type="evidence" value="ECO:0007669"/>
    <property type="project" value="InterPro"/>
</dbReference>
<dbReference type="FunFam" id="1.20.120.1230:FF:000001">
    <property type="entry name" value="Sucrose synthase"/>
    <property type="match status" value="1"/>
</dbReference>
<dbReference type="FunFam" id="3.10.450.330:FF:000001">
    <property type="entry name" value="Sucrose synthase"/>
    <property type="match status" value="1"/>
</dbReference>
<dbReference type="FunFam" id="3.40.50.2000:FF:000006">
    <property type="entry name" value="Sucrose synthase"/>
    <property type="match status" value="1"/>
</dbReference>
<dbReference type="Gene3D" id="1.20.120.1230">
    <property type="match status" value="1"/>
</dbReference>
<dbReference type="Gene3D" id="3.10.450.330">
    <property type="match status" value="1"/>
</dbReference>
<dbReference type="Gene3D" id="3.40.50.2000">
    <property type="entry name" value="Glycogen Phosphorylase B"/>
    <property type="match status" value="2"/>
</dbReference>
<dbReference type="InterPro" id="IPR001296">
    <property type="entry name" value="Glyco_trans_1"/>
</dbReference>
<dbReference type="InterPro" id="IPR000368">
    <property type="entry name" value="Sucrose_synth_GT-B1"/>
</dbReference>
<dbReference type="InterPro" id="IPR012820">
    <property type="entry name" value="Sucrose_synthase_pln/cyn"/>
</dbReference>
<dbReference type="InterPro" id="IPR056736">
    <property type="entry name" value="SUS_EPBD"/>
</dbReference>
<dbReference type="InterPro" id="IPR056735">
    <property type="entry name" value="SUS_N"/>
</dbReference>
<dbReference type="NCBIfam" id="TIGR02470">
    <property type="entry name" value="sucr_synth"/>
    <property type="match status" value="1"/>
</dbReference>
<dbReference type="PANTHER" id="PTHR45839">
    <property type="match status" value="1"/>
</dbReference>
<dbReference type="PANTHER" id="PTHR45839:SF4">
    <property type="entry name" value="SUCROSE SYNTHASE 5"/>
    <property type="match status" value="1"/>
</dbReference>
<dbReference type="Pfam" id="PF00534">
    <property type="entry name" value="Glycos_transf_1"/>
    <property type="match status" value="1"/>
</dbReference>
<dbReference type="Pfam" id="PF00862">
    <property type="entry name" value="GT-B_Sucrose_synth"/>
    <property type="match status" value="1"/>
</dbReference>
<dbReference type="Pfam" id="PF24862">
    <property type="entry name" value="SUS_EPBD"/>
    <property type="match status" value="1"/>
</dbReference>
<dbReference type="Pfam" id="PF24861">
    <property type="entry name" value="SUS_N"/>
    <property type="match status" value="1"/>
</dbReference>
<dbReference type="SUPFAM" id="SSF53756">
    <property type="entry name" value="UDP-Glycosyltransferase/glycogen phosphorylase"/>
    <property type="match status" value="1"/>
</dbReference>
<keyword id="KW-0963">Cytoplasm</keyword>
<keyword id="KW-0328">Glycosyltransferase</keyword>
<keyword id="KW-0472">Membrane</keyword>
<keyword id="KW-1185">Reference proteome</keyword>
<keyword id="KW-0808">Transferase</keyword>
<reference key="1">
    <citation type="journal article" date="2011" name="Mol. Cells">
        <title>Identification and characterization of the duplicate rice sucrose synthase genes OsSUS5 and OsSUS7 which are associated with the plasma membrane.</title>
        <authorList>
            <person name="Cho J.I."/>
            <person name="Kim H.B."/>
            <person name="Kim C.Y."/>
            <person name="Hahn T.R."/>
            <person name="Jeon J.S."/>
        </authorList>
    </citation>
    <scope>NUCLEOTIDE SEQUENCE [MRNA]</scope>
    <scope>GENE FAMILY</scope>
    <scope>SUBCELLULAR LOCATION</scope>
    <scope>TISSUE SPECIFICITY</scope>
    <source>
        <strain>cv. Nipponbare</strain>
    </source>
</reference>
<reference key="2">
    <citation type="journal article" date="2002" name="Nature">
        <title>Sequence and analysis of rice chromosome 4.</title>
        <authorList>
            <person name="Feng Q."/>
            <person name="Zhang Y."/>
            <person name="Hao P."/>
            <person name="Wang S."/>
            <person name="Fu G."/>
            <person name="Huang Y."/>
            <person name="Li Y."/>
            <person name="Zhu J."/>
            <person name="Liu Y."/>
            <person name="Hu X."/>
            <person name="Jia P."/>
            <person name="Zhang Y."/>
            <person name="Zhao Q."/>
            <person name="Ying K."/>
            <person name="Yu S."/>
            <person name="Tang Y."/>
            <person name="Weng Q."/>
            <person name="Zhang L."/>
            <person name="Lu Y."/>
            <person name="Mu J."/>
            <person name="Lu Y."/>
            <person name="Zhang L.S."/>
            <person name="Yu Z."/>
            <person name="Fan D."/>
            <person name="Liu X."/>
            <person name="Lu T."/>
            <person name="Li C."/>
            <person name="Wu Y."/>
            <person name="Sun T."/>
            <person name="Lei H."/>
            <person name="Li T."/>
            <person name="Hu H."/>
            <person name="Guan J."/>
            <person name="Wu M."/>
            <person name="Zhang R."/>
            <person name="Zhou B."/>
            <person name="Chen Z."/>
            <person name="Chen L."/>
            <person name="Jin Z."/>
            <person name="Wang R."/>
            <person name="Yin H."/>
            <person name="Cai Z."/>
            <person name="Ren S."/>
            <person name="Lv G."/>
            <person name="Gu W."/>
            <person name="Zhu G."/>
            <person name="Tu Y."/>
            <person name="Jia J."/>
            <person name="Zhang Y."/>
            <person name="Chen J."/>
            <person name="Kang H."/>
            <person name="Chen X."/>
            <person name="Shao C."/>
            <person name="Sun Y."/>
            <person name="Hu Q."/>
            <person name="Zhang X."/>
            <person name="Zhang W."/>
            <person name="Wang L."/>
            <person name="Ding C."/>
            <person name="Sheng H."/>
            <person name="Gu J."/>
            <person name="Chen S."/>
            <person name="Ni L."/>
            <person name="Zhu F."/>
            <person name="Chen W."/>
            <person name="Lan L."/>
            <person name="Lai Y."/>
            <person name="Cheng Z."/>
            <person name="Gu M."/>
            <person name="Jiang J."/>
            <person name="Li J."/>
            <person name="Hong G."/>
            <person name="Xue Y."/>
            <person name="Han B."/>
        </authorList>
    </citation>
    <scope>NUCLEOTIDE SEQUENCE [LARGE SCALE GENOMIC DNA]</scope>
    <source>
        <strain>cv. Nipponbare</strain>
    </source>
</reference>
<reference key="3">
    <citation type="journal article" date="2005" name="Nature">
        <title>The map-based sequence of the rice genome.</title>
        <authorList>
            <consortium name="International rice genome sequencing project (IRGSP)"/>
        </authorList>
    </citation>
    <scope>NUCLEOTIDE SEQUENCE [LARGE SCALE GENOMIC DNA]</scope>
    <source>
        <strain>cv. Nipponbare</strain>
    </source>
</reference>
<reference key="4">
    <citation type="journal article" date="2008" name="Nucleic Acids Res.">
        <title>The rice annotation project database (RAP-DB): 2008 update.</title>
        <authorList>
            <consortium name="The rice annotation project (RAP)"/>
        </authorList>
    </citation>
    <scope>GENOME REANNOTATION</scope>
    <source>
        <strain>cv. Nipponbare</strain>
    </source>
</reference>
<reference key="5">
    <citation type="journal article" date="2013" name="Rice">
        <title>Improvement of the Oryza sativa Nipponbare reference genome using next generation sequence and optical map data.</title>
        <authorList>
            <person name="Kawahara Y."/>
            <person name="de la Bastide M."/>
            <person name="Hamilton J.P."/>
            <person name="Kanamori H."/>
            <person name="McCombie W.R."/>
            <person name="Ouyang S."/>
            <person name="Schwartz D.C."/>
            <person name="Tanaka T."/>
            <person name="Wu J."/>
            <person name="Zhou S."/>
            <person name="Childs K.L."/>
            <person name="Davidson R.M."/>
            <person name="Lin H."/>
            <person name="Quesada-Ocampo L."/>
            <person name="Vaillancourt B."/>
            <person name="Sakai H."/>
            <person name="Lee S.S."/>
            <person name="Kim J."/>
            <person name="Numa H."/>
            <person name="Itoh T."/>
            <person name="Buell C.R."/>
            <person name="Matsumoto T."/>
        </authorList>
    </citation>
    <scope>GENOME REANNOTATION</scope>
    <source>
        <strain>cv. Nipponbare</strain>
    </source>
</reference>
<reference key="6">
    <citation type="journal article" date="2008" name="Plant Sci.">
        <title>An expression analysis profile for the entire sucrose synthase gene family in rice.</title>
        <authorList>
            <person name="Hirose T."/>
            <person name="Scofield G.N."/>
            <person name="Terao T."/>
        </authorList>
    </citation>
    <scope>GENE FAMILY</scope>
</reference>